<sequence>MASGVTVNDEVIKVFNDMKVRKSSTQEEIKKRKKAVLFCLSDDKRQIIVEEAKQILVGDIGDTVEDPYTSFVKLLPLNDCRYALYDATYETKESKKEDLVFIFWAPESAPLKSKMIYASSKDAIKKKFTGIKHEWQVNGLDDIKDRSTLGEKLGGNVVVSLEGKPL</sequence>
<name>COF2_HUMAN</name>
<gene>
    <name type="primary">CFL2</name>
</gene>
<accession>Q9Y281</accession>
<accession>G3V5P4</accession>
<feature type="initiator methionine" description="Removed" evidence="9 10 13 14 15 16">
    <location>
        <position position="1"/>
    </location>
</feature>
<feature type="chain" id="PRO_0000214907" description="Cofilin-2">
    <location>
        <begin position="2"/>
        <end position="166"/>
    </location>
</feature>
<feature type="domain" description="ADF-H" evidence="4">
    <location>
        <begin position="4"/>
        <end position="153"/>
    </location>
</feature>
<feature type="region of interest" description="Interaction with CSRP3" evidence="7">
    <location>
        <begin position="2"/>
        <end position="55"/>
    </location>
</feature>
<feature type="region of interest" description="Interaction with CSRP3" evidence="7">
    <location>
        <begin position="55"/>
        <end position="105"/>
    </location>
</feature>
<feature type="short sequence motif" description="Nuclear localization signal" evidence="3">
    <location>
        <begin position="30"/>
        <end position="34"/>
    </location>
</feature>
<feature type="modified residue" description="N-acetylalanine" evidence="9 10 13 14 15 16">
    <location>
        <position position="2"/>
    </location>
</feature>
<feature type="modified residue" description="Phosphoserine" evidence="12 14 17">
    <location>
        <position position="3"/>
    </location>
</feature>
<feature type="modified residue" description="Phosphothreonine" evidence="2">
    <location>
        <position position="6"/>
    </location>
</feature>
<feature type="splice variant" id="VSP_046831" description="In isoform 3." evidence="11">
    <location>
        <begin position="1"/>
        <end position="17"/>
    </location>
</feature>
<feature type="sequence variant" id="VAR_075983" description="In NEM7; uncertain significance; dbSNP:rs397515451." evidence="8">
    <original>V</original>
    <variation>M</variation>
    <location>
        <position position="7"/>
    </location>
</feature>
<feature type="sequence variant" id="VAR_031989" description="In NEM7; protein is less soluble when expressed in Escherichia coli; dbSNP:rs80358250." evidence="6">
    <original>A</original>
    <variation>T</variation>
    <location>
        <position position="35"/>
    </location>
</feature>
<feature type="sequence variant" id="VAR_036458" description="In a breast cancer sample; somatic mutation." evidence="5">
    <original>I</original>
    <variation>M</variation>
    <location>
        <position position="47"/>
    </location>
</feature>
<feature type="helix" evidence="18">
    <location>
        <begin position="9"/>
        <end position="11"/>
    </location>
</feature>
<feature type="helix" evidence="18">
    <location>
        <begin position="12"/>
        <end position="19"/>
    </location>
</feature>
<feature type="turn" evidence="18">
    <location>
        <begin position="24"/>
        <end position="27"/>
    </location>
</feature>
<feature type="helix" evidence="18">
    <location>
        <begin position="28"/>
        <end position="31"/>
    </location>
</feature>
<feature type="strand" evidence="18">
    <location>
        <begin position="37"/>
        <end position="40"/>
    </location>
</feature>
<feature type="strand" evidence="18">
    <location>
        <begin position="44"/>
        <end position="49"/>
    </location>
</feature>
<feature type="helix" evidence="18">
    <location>
        <begin position="57"/>
        <end position="60"/>
    </location>
</feature>
<feature type="turn" evidence="18">
    <location>
        <begin position="61"/>
        <end position="63"/>
    </location>
</feature>
<feature type="helix" evidence="18">
    <location>
        <begin position="68"/>
        <end position="74"/>
    </location>
</feature>
<feature type="strand" evidence="18">
    <location>
        <begin position="77"/>
        <end position="79"/>
    </location>
</feature>
<feature type="strand" evidence="18">
    <location>
        <begin position="81"/>
        <end position="90"/>
    </location>
</feature>
<feature type="strand" evidence="18">
    <location>
        <begin position="95"/>
        <end position="104"/>
    </location>
</feature>
<feature type="helix" evidence="18">
    <location>
        <begin position="111"/>
        <end position="127"/>
    </location>
</feature>
<feature type="strand" evidence="18">
    <location>
        <begin position="130"/>
        <end position="137"/>
    </location>
</feature>
<feature type="helix" evidence="18">
    <location>
        <begin position="140"/>
        <end position="144"/>
    </location>
</feature>
<feature type="helix" evidence="18">
    <location>
        <begin position="146"/>
        <end position="153"/>
    </location>
</feature>
<feature type="strand" evidence="18">
    <location>
        <begin position="158"/>
        <end position="161"/>
    </location>
</feature>
<feature type="modified residue" description="N-acetylmethionine" evidence="9">
    <location sequence="Q9Y281-3">
        <position position="1"/>
    </location>
</feature>
<reference key="1">
    <citation type="submission" date="1999-03" db="EMBL/GenBank/DDBJ databases">
        <title>Isolation of two isoforms of human cofilin cDNA.</title>
        <authorList>
            <person name="Jin J."/>
            <person name="Li G."/>
            <person name="Hu S."/>
            <person name="Li W."/>
            <person name="Yuan J."/>
            <person name="Qiang B."/>
        </authorList>
    </citation>
    <scope>NUCLEOTIDE SEQUENCE [MRNA] (ISOFORMS CFL2A AND CFL2B)</scope>
</reference>
<reference key="2">
    <citation type="journal article" date="2001" name="Eur. J. Biochem.">
        <title>Characterization of human muscle type cofilin (CFL2) in normal and regenerating muscle.</title>
        <authorList>
            <person name="Thirion C."/>
            <person name="Stucka R."/>
            <person name="Mendel B."/>
            <person name="Gruhler A."/>
            <person name="Jaksch M."/>
            <person name="Nowak K.J."/>
            <person name="Binz N."/>
            <person name="Laing N.G."/>
            <person name="Lochmuller H."/>
        </authorList>
    </citation>
    <scope>NUCLEOTIDE SEQUENCE [GENOMIC DNA]</scope>
</reference>
<reference key="3">
    <citation type="journal article" date="2003" name="Nature">
        <title>The DNA sequence and analysis of human chromosome 14.</title>
        <authorList>
            <person name="Heilig R."/>
            <person name="Eckenberg R."/>
            <person name="Petit J.-L."/>
            <person name="Fonknechten N."/>
            <person name="Da Silva C."/>
            <person name="Cattolico L."/>
            <person name="Levy M."/>
            <person name="Barbe V."/>
            <person name="De Berardinis V."/>
            <person name="Ureta-Vidal A."/>
            <person name="Pelletier E."/>
            <person name="Vico V."/>
            <person name="Anthouard V."/>
            <person name="Rowen L."/>
            <person name="Madan A."/>
            <person name="Qin S."/>
            <person name="Sun H."/>
            <person name="Du H."/>
            <person name="Pepin K."/>
            <person name="Artiguenave F."/>
            <person name="Robert C."/>
            <person name="Cruaud C."/>
            <person name="Bruels T."/>
            <person name="Jaillon O."/>
            <person name="Friedlander L."/>
            <person name="Samson G."/>
            <person name="Brottier P."/>
            <person name="Cure S."/>
            <person name="Segurens B."/>
            <person name="Aniere F."/>
            <person name="Samain S."/>
            <person name="Crespeau H."/>
            <person name="Abbasi N."/>
            <person name="Aiach N."/>
            <person name="Boscus D."/>
            <person name="Dickhoff R."/>
            <person name="Dors M."/>
            <person name="Dubois I."/>
            <person name="Friedman C."/>
            <person name="Gouyvenoux M."/>
            <person name="James R."/>
            <person name="Madan A."/>
            <person name="Mairey-Estrada B."/>
            <person name="Mangenot S."/>
            <person name="Martins N."/>
            <person name="Menard M."/>
            <person name="Oztas S."/>
            <person name="Ratcliffe A."/>
            <person name="Shaffer T."/>
            <person name="Trask B."/>
            <person name="Vacherie B."/>
            <person name="Bellemere C."/>
            <person name="Belser C."/>
            <person name="Besnard-Gonnet M."/>
            <person name="Bartol-Mavel D."/>
            <person name="Boutard M."/>
            <person name="Briez-Silla S."/>
            <person name="Combette S."/>
            <person name="Dufosse-Laurent V."/>
            <person name="Ferron C."/>
            <person name="Lechaplais C."/>
            <person name="Louesse C."/>
            <person name="Muselet D."/>
            <person name="Magdelenat G."/>
            <person name="Pateau E."/>
            <person name="Petit E."/>
            <person name="Sirvain-Trukniewicz P."/>
            <person name="Trybou A."/>
            <person name="Vega-Czarny N."/>
            <person name="Bataille E."/>
            <person name="Bluet E."/>
            <person name="Bordelais I."/>
            <person name="Dubois M."/>
            <person name="Dumont C."/>
            <person name="Guerin T."/>
            <person name="Haffray S."/>
            <person name="Hammadi R."/>
            <person name="Muanga J."/>
            <person name="Pellouin V."/>
            <person name="Robert D."/>
            <person name="Wunderle E."/>
            <person name="Gauguet G."/>
            <person name="Roy A."/>
            <person name="Sainte-Marthe L."/>
            <person name="Verdier J."/>
            <person name="Verdier-Discala C."/>
            <person name="Hillier L.W."/>
            <person name="Fulton L."/>
            <person name="McPherson J."/>
            <person name="Matsuda F."/>
            <person name="Wilson R."/>
            <person name="Scarpelli C."/>
            <person name="Gyapay G."/>
            <person name="Wincker P."/>
            <person name="Saurin W."/>
            <person name="Quetier F."/>
            <person name="Waterston R."/>
            <person name="Hood L."/>
            <person name="Weissenbach J."/>
        </authorList>
    </citation>
    <scope>NUCLEOTIDE SEQUENCE [LARGE SCALE GENOMIC DNA]</scope>
</reference>
<reference key="4">
    <citation type="submission" date="2005-09" db="EMBL/GenBank/DDBJ databases">
        <authorList>
            <person name="Mural R.J."/>
            <person name="Istrail S."/>
            <person name="Sutton G.G."/>
            <person name="Florea L."/>
            <person name="Halpern A.L."/>
            <person name="Mobarry C.M."/>
            <person name="Lippert R."/>
            <person name="Walenz B."/>
            <person name="Shatkay H."/>
            <person name="Dew I."/>
            <person name="Miller J.R."/>
            <person name="Flanigan M.J."/>
            <person name="Edwards N.J."/>
            <person name="Bolanos R."/>
            <person name="Fasulo D."/>
            <person name="Halldorsson B.V."/>
            <person name="Hannenhalli S."/>
            <person name="Turner R."/>
            <person name="Yooseph S."/>
            <person name="Lu F."/>
            <person name="Nusskern D.R."/>
            <person name="Shue B.C."/>
            <person name="Zheng X.H."/>
            <person name="Zhong F."/>
            <person name="Delcher A.L."/>
            <person name="Huson D.H."/>
            <person name="Kravitz S.A."/>
            <person name="Mouchard L."/>
            <person name="Reinert K."/>
            <person name="Remington K.A."/>
            <person name="Clark A.G."/>
            <person name="Waterman M.S."/>
            <person name="Eichler E.E."/>
            <person name="Adams M.D."/>
            <person name="Hunkapiller M.W."/>
            <person name="Myers E.W."/>
            <person name="Venter J.C."/>
        </authorList>
    </citation>
    <scope>NUCLEOTIDE SEQUENCE [LARGE SCALE GENOMIC DNA]</scope>
</reference>
<reference key="5">
    <citation type="journal article" date="2004" name="Genome Res.">
        <title>The status, quality, and expansion of the NIH full-length cDNA project: the Mammalian Gene Collection (MGC).</title>
        <authorList>
            <consortium name="The MGC Project Team"/>
        </authorList>
    </citation>
    <scope>NUCLEOTIDE SEQUENCE [LARGE SCALE MRNA] (ISOFORMS CFL2A AND CFL2B)</scope>
    <source>
        <tissue>Bone marrow</tissue>
        <tissue>Placenta</tissue>
        <tissue>Skeletal muscle</tissue>
    </source>
</reference>
<reference key="6">
    <citation type="submission" date="2008-03" db="UniProtKB">
        <authorList>
            <person name="Bienvenut W.V."/>
            <person name="Calvo F."/>
            <person name="Kolch W."/>
        </authorList>
    </citation>
    <scope>PROTEIN SEQUENCE OF 2-21; 35-92; 96-112; 115-125 AND 153-166</scope>
    <scope>CLEAVAGE OF INITIATOR METHIONINE</scope>
    <scope>ACETYLATION AT ALA-2</scope>
    <scope>IDENTIFICATION BY MASS SPECTROMETRY</scope>
    <source>
        <tissue>Cervix carcinoma</tissue>
    </source>
</reference>
<reference key="7">
    <citation type="journal article" date="2006" name="Cell">
        <title>Global, in vivo, and site-specific phosphorylation dynamics in signaling networks.</title>
        <authorList>
            <person name="Olsen J.V."/>
            <person name="Blagoev B."/>
            <person name="Gnad F."/>
            <person name="Macek B."/>
            <person name="Kumar C."/>
            <person name="Mortensen P."/>
            <person name="Mann M."/>
        </authorList>
    </citation>
    <scope>PHOSPHORYLATION [LARGE SCALE ANALYSIS] AT SER-3</scope>
    <scope>IDENTIFICATION BY MASS SPECTROMETRY [LARGE SCALE ANALYSIS]</scope>
    <source>
        <tissue>Cervix carcinoma</tissue>
    </source>
</reference>
<reference key="8">
    <citation type="journal article" date="2009" name="Anal. Chem.">
        <title>Lys-N and trypsin cover complementary parts of the phosphoproteome in a refined SCX-based approach.</title>
        <authorList>
            <person name="Gauci S."/>
            <person name="Helbig A.O."/>
            <person name="Slijper M."/>
            <person name="Krijgsveld J."/>
            <person name="Heck A.J."/>
            <person name="Mohammed S."/>
        </authorList>
    </citation>
    <scope>ACETYLATION [LARGE SCALE ANALYSIS] AT ALA-2</scope>
    <scope>CLEAVAGE OF INITIATOR METHIONINE [LARGE SCALE ANALYSIS]</scope>
    <scope>IDENTIFICATION BY MASS SPECTROMETRY [LARGE SCALE ANALYSIS]</scope>
</reference>
<reference key="9">
    <citation type="journal article" date="2009" name="Mol. Cell. Biol.">
        <title>Muscle LIM protein interacts with cofilin 2 and regulates F-actin dynamics in cardiac and skeletal muscle.</title>
        <authorList>
            <person name="Papalouka V."/>
            <person name="Arvanitis D.A."/>
            <person name="Vafiadaki E."/>
            <person name="Mavroidis M."/>
            <person name="Papadodima S.A."/>
            <person name="Spiliopoulou C.A."/>
            <person name="Kremastinos D.T."/>
            <person name="Kranias E.G."/>
            <person name="Sanoudou D."/>
        </authorList>
    </citation>
    <scope>FUNCTION</scope>
    <scope>SUBCELLULAR LOCATION</scope>
    <scope>INTERACTION WITH CSRP3</scope>
</reference>
<reference key="10">
    <citation type="journal article" date="2010" name="Sci. Signal.">
        <title>Quantitative phosphoproteomics reveals widespread full phosphorylation site occupancy during mitosis.</title>
        <authorList>
            <person name="Olsen J.V."/>
            <person name="Vermeulen M."/>
            <person name="Santamaria A."/>
            <person name="Kumar C."/>
            <person name="Miller M.L."/>
            <person name="Jensen L.J."/>
            <person name="Gnad F."/>
            <person name="Cox J."/>
            <person name="Jensen T.S."/>
            <person name="Nigg E.A."/>
            <person name="Brunak S."/>
            <person name="Mann M."/>
        </authorList>
    </citation>
    <scope>ACETYLATION [LARGE SCALE ANALYSIS] AT ALA-2</scope>
    <scope>PHOSPHORYLATION [LARGE SCALE ANALYSIS] AT SER-3</scope>
    <scope>CLEAVAGE OF INITIATOR METHIONINE [LARGE SCALE ANALYSIS]</scope>
    <scope>IDENTIFICATION BY MASS SPECTROMETRY [LARGE SCALE ANALYSIS]</scope>
    <source>
        <tissue>Cervix carcinoma</tissue>
    </source>
</reference>
<reference key="11">
    <citation type="journal article" date="2011" name="BMC Syst. Biol.">
        <title>Initial characterization of the human central proteome.</title>
        <authorList>
            <person name="Burkard T.R."/>
            <person name="Planyavsky M."/>
            <person name="Kaupe I."/>
            <person name="Breitwieser F.P."/>
            <person name="Buerckstuemmer T."/>
            <person name="Bennett K.L."/>
            <person name="Superti-Furga G."/>
            <person name="Colinge J."/>
        </authorList>
    </citation>
    <scope>IDENTIFICATION BY MASS SPECTROMETRY [LARGE SCALE ANALYSIS]</scope>
</reference>
<reference key="12">
    <citation type="journal article" date="2012" name="Mol. Cell. Proteomics">
        <title>Comparative large-scale characterisation of plant vs. mammal proteins reveals similar and idiosyncratic N-alpha acetylation features.</title>
        <authorList>
            <person name="Bienvenut W.V."/>
            <person name="Sumpton D."/>
            <person name="Martinez A."/>
            <person name="Lilla S."/>
            <person name="Espagne C."/>
            <person name="Meinnel T."/>
            <person name="Giglione C."/>
        </authorList>
    </citation>
    <scope>ACETYLATION [LARGE SCALE ANALYSIS] AT ALA-2</scope>
    <scope>CLEAVAGE OF INITIATOR METHIONINE [LARGE SCALE ANALYSIS]</scope>
    <scope>IDENTIFICATION BY MASS SPECTROMETRY [LARGE SCALE ANALYSIS]</scope>
</reference>
<reference key="13">
    <citation type="journal article" date="2012" name="Proc. Natl. Acad. Sci. U.S.A.">
        <title>N-terminal acetylome analyses and functional insights of the N-terminal acetyltransferase NatB.</title>
        <authorList>
            <person name="Van Damme P."/>
            <person name="Lasa M."/>
            <person name="Polevoda B."/>
            <person name="Gazquez C."/>
            <person name="Elosegui-Artola A."/>
            <person name="Kim D.S."/>
            <person name="De Juan-Pardo E."/>
            <person name="Demeyer K."/>
            <person name="Hole K."/>
            <person name="Larrea E."/>
            <person name="Timmerman E."/>
            <person name="Prieto J."/>
            <person name="Arnesen T."/>
            <person name="Sherman F."/>
            <person name="Gevaert K."/>
            <person name="Aldabe R."/>
        </authorList>
    </citation>
    <scope>ACETYLATION [LARGE SCALE ANALYSIS] AT ALA-2</scope>
    <scope>CLEAVAGE OF INITIATOR METHIONINE [LARGE SCALE ANALYSIS]</scope>
    <scope>IDENTIFICATION BY MASS SPECTROMETRY [LARGE SCALE ANALYSIS]</scope>
</reference>
<reference key="14">
    <citation type="journal article" date="2013" name="J. Proteome Res.">
        <title>Toward a comprehensive characterization of a human cancer cell phosphoproteome.</title>
        <authorList>
            <person name="Zhou H."/>
            <person name="Di Palma S."/>
            <person name="Preisinger C."/>
            <person name="Peng M."/>
            <person name="Polat A.N."/>
            <person name="Heck A.J."/>
            <person name="Mohammed S."/>
        </authorList>
    </citation>
    <scope>PHOSPHORYLATION [LARGE SCALE ANALYSIS] AT SER-3</scope>
    <scope>IDENTIFICATION BY MASS SPECTROMETRY [LARGE SCALE ANALYSIS]</scope>
    <source>
        <tissue>Cervix carcinoma</tissue>
        <tissue>Erythroleukemia</tissue>
    </source>
</reference>
<reference key="15">
    <citation type="journal article" date="2014" name="J. Proteomics">
        <title>An enzyme assisted RP-RPLC approach for in-depth analysis of human liver phosphoproteome.</title>
        <authorList>
            <person name="Bian Y."/>
            <person name="Song C."/>
            <person name="Cheng K."/>
            <person name="Dong M."/>
            <person name="Wang F."/>
            <person name="Huang J."/>
            <person name="Sun D."/>
            <person name="Wang L."/>
            <person name="Ye M."/>
            <person name="Zou H."/>
        </authorList>
    </citation>
    <scope>IDENTIFICATION BY MASS SPECTROMETRY [LARGE SCALE ANALYSIS]</scope>
    <source>
        <tissue>Liver</tissue>
    </source>
</reference>
<reference key="16">
    <citation type="journal article" date="2023" name="Life. Sci Alliance">
        <title>N-terminal proteoforms may engage in different protein complexes.</title>
        <authorList>
            <person name="Bogaert A."/>
            <person name="Fijalkowska D."/>
            <person name="Staes A."/>
            <person name="Van de Steene T."/>
            <person name="Vuylsteke M."/>
            <person name="Stadler C."/>
            <person name="Eyckerman S."/>
            <person name="Spirohn K."/>
            <person name="Hao T."/>
            <person name="Calderwood M.A."/>
            <person name="Gevaert K."/>
        </authorList>
    </citation>
    <scope>CLEAVAGE OF INITIATOR METHIONINE (ISOFORM 1)</scope>
    <scope>ACETYLATION AT ALA-2 (ISOFORM 1)</scope>
    <scope>ACETYLATION AT MET-1 (ISOFORM 3)</scope>
</reference>
<reference key="17">
    <citation type="journal article" date="2006" name="Science">
        <title>The consensus coding sequences of human breast and colorectal cancers.</title>
        <authorList>
            <person name="Sjoeblom T."/>
            <person name="Jones S."/>
            <person name="Wood L.D."/>
            <person name="Parsons D.W."/>
            <person name="Lin J."/>
            <person name="Barber T.D."/>
            <person name="Mandelker D."/>
            <person name="Leary R.J."/>
            <person name="Ptak J."/>
            <person name="Silliman N."/>
            <person name="Szabo S."/>
            <person name="Buckhaults P."/>
            <person name="Farrell C."/>
            <person name="Meeh P."/>
            <person name="Markowitz S.D."/>
            <person name="Willis J."/>
            <person name="Dawson D."/>
            <person name="Willson J.K.V."/>
            <person name="Gazdar A.F."/>
            <person name="Hartigan J."/>
            <person name="Wu L."/>
            <person name="Liu C."/>
            <person name="Parmigiani G."/>
            <person name="Park B.H."/>
            <person name="Bachman K.E."/>
            <person name="Papadopoulos N."/>
            <person name="Vogelstein B."/>
            <person name="Kinzler K.W."/>
            <person name="Velculescu V.E."/>
        </authorList>
    </citation>
    <scope>VARIANT [LARGE SCALE ANALYSIS] MET-47</scope>
</reference>
<reference key="18">
    <citation type="journal article" date="2007" name="Am. J. Hum. Genet.">
        <title>Nemaline myopathy with minicores caused by mutation of the CFL2 gene encoding the skeletal muscle actin-binding protein, cofilin-2.</title>
        <authorList>
            <person name="Agrawal P.B."/>
            <person name="Greenleaf R.S."/>
            <person name="Tomczak K.K."/>
            <person name="Lehtokari V.-L."/>
            <person name="Wallgren-Pettersson C."/>
            <person name="Wallefeld W."/>
            <person name="Laing N.G."/>
            <person name="Darras B.T."/>
            <person name="Maciver S.K."/>
            <person name="Dormitzer P.R."/>
            <person name="Beggs A.H."/>
        </authorList>
    </citation>
    <scope>VARIANT NEM7 THR-35</scope>
    <scope>CHARACTERIZATION OF VARIANT NEM7 THR-35</scope>
</reference>
<reference key="19">
    <citation type="journal article" date="2012" name="Neuromuscul. Disord.">
        <title>Congenital myopathy caused by a novel missense mutation in the CFL2 gene.</title>
        <authorList>
            <person name="Ockeloen C.W."/>
            <person name="Gilhuis H.J."/>
            <person name="Pfundt R."/>
            <person name="Kamsteeg E.J."/>
            <person name="Agrawal P.B."/>
            <person name="Beggs A.H."/>
            <person name="Dara Hama-Amin A."/>
            <person name="Diekstra A."/>
            <person name="Knoers N.V."/>
            <person name="Lammens M."/>
            <person name="van Alfen N."/>
        </authorList>
    </citation>
    <scope>VARIANT NEM7 MET-7</scope>
</reference>
<organism>
    <name type="scientific">Homo sapiens</name>
    <name type="common">Human</name>
    <dbReference type="NCBI Taxonomy" id="9606"/>
    <lineage>
        <taxon>Eukaryota</taxon>
        <taxon>Metazoa</taxon>
        <taxon>Chordata</taxon>
        <taxon>Craniata</taxon>
        <taxon>Vertebrata</taxon>
        <taxon>Euteleostomi</taxon>
        <taxon>Mammalia</taxon>
        <taxon>Eutheria</taxon>
        <taxon>Euarchontoglires</taxon>
        <taxon>Primates</taxon>
        <taxon>Haplorrhini</taxon>
        <taxon>Catarrhini</taxon>
        <taxon>Hominidae</taxon>
        <taxon>Homo</taxon>
    </lineage>
</organism>
<comment type="function">
    <text evidence="2 7">Controls reversibly actin polymerization and depolymerization in a pH-sensitive manner. Its F-actin depolymerization activity is regulated by association with CSPR3 (PubMed:19752190). It has the ability to bind G- and F-actin in a 1:1 ratio of cofilin to actin. It is the major component of intranuclear and cytoplasmic actin rods. Required for muscle maintenance. May play a role during the exchange of alpha-actin forms during the early postnatal remodeling of the sarcomere (By similarity).</text>
</comment>
<comment type="subunit">
    <text evidence="7">Interacts with CSRP3; possibly two molecules of CFL2 can interact with one molecule if CSRP3.</text>
</comment>
<comment type="interaction">
    <interactant intactId="EBI-351218">
        <id>Q9Y281</id>
    </interactant>
    <interactant intactId="EBI-353944">
        <id>P60709</id>
        <label>ACTB</label>
    </interactant>
    <organismsDiffer>false</organismsDiffer>
    <experiments>11</experiments>
</comment>
<comment type="interaction">
    <interactant intactId="EBI-351218">
        <id>Q9Y281</id>
    </interactant>
    <interactant intactId="EBI-351292">
        <id>P63261</id>
        <label>ACTG1</label>
    </interactant>
    <organismsDiffer>false</organismsDiffer>
    <experiments>10</experiments>
</comment>
<comment type="interaction">
    <interactant intactId="EBI-351218">
        <id>Q9Y281</id>
    </interactant>
    <interactant intactId="EBI-352733">
        <id>P23528</id>
        <label>CFL1</label>
    </interactant>
    <organismsDiffer>false</organismsDiffer>
    <experiments>3</experiments>
</comment>
<comment type="interaction">
    <interactant intactId="EBI-351218">
        <id>Q9Y281</id>
    </interactant>
    <interactant intactId="EBI-5658719">
        <id>P50461</id>
        <label>CSRP3</label>
    </interactant>
    <organismsDiffer>false</organismsDiffer>
    <experiments>2</experiments>
</comment>
<comment type="interaction">
    <interactant intactId="EBI-351218">
        <id>Q9Y281</id>
    </interactant>
    <interactant intactId="EBI-745191">
        <id>P60981</id>
        <label>DSTN</label>
    </interactant>
    <organismsDiffer>false</organismsDiffer>
    <experiments>3</experiments>
</comment>
<comment type="interaction">
    <interactant intactId="EBI-351218">
        <id>Q9Y281</id>
    </interactant>
    <interactant intactId="EBI-356015">
        <id>Q14204</id>
        <label>DYNC1H1</label>
    </interactant>
    <organismsDiffer>false</organismsDiffer>
    <experiments>3</experiments>
</comment>
<comment type="interaction">
    <interactant intactId="EBI-351218">
        <id>Q9Y281</id>
    </interactant>
    <interactant intactId="EBI-2339219">
        <id>Q08426</id>
        <label>EHHADH</label>
    </interactant>
    <organismsDiffer>false</organismsDiffer>
    <experiments>3</experiments>
</comment>
<comment type="interaction">
    <interactant intactId="EBI-351218">
        <id>Q9Y281</id>
    </interactant>
    <interactant intactId="EBI-2432309">
        <id>Q92876</id>
        <label>KLK6</label>
    </interactant>
    <organismsDiffer>false</organismsDiffer>
    <experiments>3</experiments>
</comment>
<comment type="interaction">
    <interactant intactId="EBI-351218">
        <id>Q9Y281</id>
    </interactant>
    <interactant intactId="EBI-752420">
        <id>Q9NUX5</id>
        <label>POT1</label>
    </interactant>
    <organismsDiffer>false</organismsDiffer>
    <experiments>3</experiments>
</comment>
<comment type="interaction">
    <interactant intactId="EBI-351218">
        <id>Q9Y281</id>
    </interactant>
    <interactant intactId="EBI-752037">
        <id>P61019</id>
        <label>RAB2A</label>
    </interactant>
    <organismsDiffer>false</organismsDiffer>
    <experiments>3</experiments>
</comment>
<comment type="interaction">
    <interactant intactId="EBI-351218">
        <id>Q9Y281</id>
    </interactant>
    <interactant intactId="EBI-2340927">
        <id>P78317</id>
        <label>RNF4</label>
    </interactant>
    <organismsDiffer>false</organismsDiffer>
    <experiments>3</experiments>
</comment>
<comment type="interaction">
    <interactant intactId="EBI-351218">
        <id>Q9Y281</id>
    </interactant>
    <interactant intactId="EBI-2813981">
        <id>Q9C029</id>
        <label>TRIM7</label>
    </interactant>
    <organismsDiffer>false</organismsDiffer>
    <experiments>3</experiments>
</comment>
<comment type="interaction">
    <interactant intactId="EBI-351218">
        <id>Q9Y281</id>
    </interactant>
    <interactant intactId="EBI-10180829">
        <id>Q7KZS0</id>
        <label>UBE2I</label>
    </interactant>
    <organismsDiffer>false</organismsDiffer>
    <experiments>3</experiments>
</comment>
<comment type="subcellular location">
    <subcellularLocation>
        <location evidence="1">Nucleus matrix</location>
    </subcellularLocation>
    <subcellularLocation>
        <location evidence="1">Cytoplasm</location>
        <location evidence="1">Cytoskeleton</location>
    </subcellularLocation>
    <text evidence="7">Colocalizes with CSPR3 in the Z line of sarcomeres.</text>
</comment>
<comment type="alternative products">
    <event type="alternative splicing"/>
    <isoform>
        <id>Q9Y281-1</id>
        <name>CFL2b</name>
        <sequence type="displayed"/>
    </isoform>
    <isoform>
        <id>Q9Y281-2</id>
        <name>CFL2a</name>
        <sequence type="not described"/>
    </isoform>
    <isoform>
        <id>Q9Y281-3</id>
        <name>3</name>
        <sequence type="described" ref="VSP_046831"/>
    </isoform>
    <text>Isoforms are identical at the level of the protein sequence.</text>
</comment>
<comment type="tissue specificity">
    <text>Isoform CFL2b is expressed predominantly in skeletal muscle and heart. Isoform CFL2a is expressed in various tissues.</text>
</comment>
<comment type="PTM">
    <text>The phosphorylation of Ser-24 may prevent recognition of the nuclear localization signal.</text>
</comment>
<comment type="disease" evidence="6 8">
    <disease id="DI-02037">
        <name>Nemaline myopathy 7</name>
        <acronym>NEM7</acronym>
        <description>A form of nemaline myopathy. Nemaline myopathies are muscular disorders characterized by muscle weakness of varying severity and onset, and abnormal thread-like or rod-shaped structures in muscle fibers on histologic examination. Nemaline myopathy type 7 presents at birth with hypotonia and generalized weakness. Major motor milestones are delayed, but independent ambulation is achieved.</description>
        <dbReference type="MIM" id="610687"/>
    </disease>
    <text>The disease is caused by variants affecting the gene represented in this entry.</text>
</comment>
<comment type="similarity">
    <text evidence="11">Belongs to the actin-binding proteins ADF family.</text>
</comment>
<comment type="online information" name="Wikipedia">
    <link uri="https://en.wikipedia.org/wiki/Cofilin"/>
    <text>Cofilin entry</text>
</comment>
<protein>
    <recommendedName>
        <fullName>Cofilin-2</fullName>
    </recommendedName>
    <alternativeName>
        <fullName>Cofilin, muscle isoform</fullName>
    </alternativeName>
</protein>
<dbReference type="EMBL" id="AF134802">
    <property type="protein sequence ID" value="AAD31280.1"/>
    <property type="molecule type" value="mRNA"/>
</dbReference>
<dbReference type="EMBL" id="AF134803">
    <property type="protein sequence ID" value="AAD31281.1"/>
    <property type="molecule type" value="mRNA"/>
</dbReference>
<dbReference type="EMBL" id="AF283513">
    <property type="protein sequence ID" value="AAF97934.1"/>
    <property type="molecule type" value="Genomic_DNA"/>
</dbReference>
<dbReference type="EMBL" id="AF242299">
    <property type="protein sequence ID" value="AAF64498.1"/>
    <property type="molecule type" value="Genomic_DNA"/>
</dbReference>
<dbReference type="EMBL" id="AL355885">
    <property type="status" value="NOT_ANNOTATED_CDS"/>
    <property type="molecule type" value="Genomic_DNA"/>
</dbReference>
<dbReference type="EMBL" id="CH471078">
    <property type="protein sequence ID" value="EAW65912.1"/>
    <property type="molecule type" value="Genomic_DNA"/>
</dbReference>
<dbReference type="EMBL" id="BC011444">
    <property type="protein sequence ID" value="AAH11444.1"/>
    <property type="molecule type" value="mRNA"/>
</dbReference>
<dbReference type="EMBL" id="BC022364">
    <property type="protein sequence ID" value="AAH22364.1"/>
    <property type="molecule type" value="mRNA"/>
</dbReference>
<dbReference type="EMBL" id="BC022876">
    <property type="protein sequence ID" value="AAH22876.1"/>
    <property type="molecule type" value="mRNA"/>
</dbReference>
<dbReference type="CCDS" id="CCDS58311.1">
    <molecule id="Q9Y281-3"/>
</dbReference>
<dbReference type="CCDS" id="CCDS9649.1">
    <molecule id="Q9Y281-1"/>
</dbReference>
<dbReference type="CCDS" id="CCDS9650.1">
    <molecule id="Q9Y281-1"/>
</dbReference>
<dbReference type="RefSeq" id="NP_001230574.1">
    <molecule id="Q9Y281-3"/>
    <property type="nucleotide sequence ID" value="NM_001243645.2"/>
</dbReference>
<dbReference type="RefSeq" id="NP_068733.1">
    <molecule id="Q9Y281-1"/>
    <property type="nucleotide sequence ID" value="NM_021914.8"/>
</dbReference>
<dbReference type="RefSeq" id="NP_619579.1">
    <molecule id="Q9Y281-1"/>
    <property type="nucleotide sequence ID" value="NM_138638.5"/>
</dbReference>
<dbReference type="RefSeq" id="XP_011534665.1">
    <property type="nucleotide sequence ID" value="XM_011536363.2"/>
</dbReference>
<dbReference type="PDB" id="7M0G">
    <property type="method" value="NMR"/>
    <property type="chains" value="A=1-166"/>
</dbReference>
<dbReference type="PDB" id="7U8K">
    <property type="method" value="NMR"/>
    <property type="chains" value="K/L/M/N/O/P/Q/R=1-166"/>
</dbReference>
<dbReference type="PDBsum" id="7M0G"/>
<dbReference type="PDBsum" id="7U8K"/>
<dbReference type="BMRB" id="Q9Y281"/>
<dbReference type="SMR" id="Q9Y281"/>
<dbReference type="BioGRID" id="107500">
    <property type="interactions" value="130"/>
</dbReference>
<dbReference type="DIP" id="DIP-33178N"/>
<dbReference type="FunCoup" id="Q9Y281">
    <property type="interactions" value="897"/>
</dbReference>
<dbReference type="IntAct" id="Q9Y281">
    <property type="interactions" value="54"/>
</dbReference>
<dbReference type="MINT" id="Q9Y281"/>
<dbReference type="STRING" id="9606.ENSP00000298159"/>
<dbReference type="GlyGen" id="Q9Y281">
    <property type="glycosylation" value="1 site, 1 O-linked glycan (1 site)"/>
</dbReference>
<dbReference type="iPTMnet" id="Q9Y281"/>
<dbReference type="PhosphoSitePlus" id="Q9Y281"/>
<dbReference type="SwissPalm" id="Q9Y281"/>
<dbReference type="BioMuta" id="CFL2"/>
<dbReference type="DMDM" id="6831517"/>
<dbReference type="jPOST" id="Q9Y281"/>
<dbReference type="MassIVE" id="Q9Y281"/>
<dbReference type="PaxDb" id="9606-ENSP00000298159"/>
<dbReference type="PeptideAtlas" id="Q9Y281"/>
<dbReference type="PRIDE" id="Q9Y281"/>
<dbReference type="ProteomicsDB" id="33582"/>
<dbReference type="ProteomicsDB" id="85686">
    <molecule id="Q9Y281-1"/>
</dbReference>
<dbReference type="Pumba" id="Q9Y281"/>
<dbReference type="TopDownProteomics" id="Q9Y281-1">
    <molecule id="Q9Y281-1"/>
</dbReference>
<dbReference type="Antibodypedia" id="9589">
    <property type="antibodies" value="341 antibodies from 37 providers"/>
</dbReference>
<dbReference type="DNASU" id="1073"/>
<dbReference type="Ensembl" id="ENST00000298159.11">
    <molecule id="Q9Y281-1"/>
    <property type="protein sequence ID" value="ENSP00000298159.6"/>
    <property type="gene ID" value="ENSG00000165410.15"/>
</dbReference>
<dbReference type="Ensembl" id="ENST00000341223.8">
    <molecule id="Q9Y281-1"/>
    <property type="protein sequence ID" value="ENSP00000340635.3"/>
    <property type="gene ID" value="ENSG00000165410.15"/>
</dbReference>
<dbReference type="Ensembl" id="ENST00000555765.5">
    <molecule id="Q9Y281-3"/>
    <property type="protein sequence ID" value="ENSP00000452451.1"/>
    <property type="gene ID" value="ENSG00000165410.15"/>
</dbReference>
<dbReference type="Ensembl" id="ENST00000556161.1">
    <molecule id="Q9Y281-3"/>
    <property type="protein sequence ID" value="ENSP00000452188.1"/>
    <property type="gene ID" value="ENSG00000165410.15"/>
</dbReference>
<dbReference type="Ensembl" id="ENST00000672163.1">
    <molecule id="Q9Y281-1"/>
    <property type="protein sequence ID" value="ENSP00000500375.1"/>
    <property type="gene ID" value="ENSG00000165410.15"/>
</dbReference>
<dbReference type="Ensembl" id="ENST00000672517.1">
    <molecule id="Q9Y281-1"/>
    <property type="protein sequence ID" value="ENSP00000500532.1"/>
    <property type="gene ID" value="ENSG00000165410.15"/>
</dbReference>
<dbReference type="Ensembl" id="ENST00000673315.1">
    <molecule id="Q9Y281-3"/>
    <property type="protein sequence ID" value="ENSP00000500002.1"/>
    <property type="gene ID" value="ENSG00000165410.15"/>
</dbReference>
<dbReference type="GeneID" id="1073"/>
<dbReference type="KEGG" id="hsa:1073"/>
<dbReference type="MANE-Select" id="ENST00000298159.11">
    <property type="protein sequence ID" value="ENSP00000298159.6"/>
    <property type="RefSeq nucleotide sequence ID" value="NM_138638.5"/>
    <property type="RefSeq protein sequence ID" value="NP_619579.1"/>
</dbReference>
<dbReference type="UCSC" id="uc001wsg.4">
    <molecule id="Q9Y281-1"/>
    <property type="organism name" value="human"/>
</dbReference>
<dbReference type="AGR" id="HGNC:1875"/>
<dbReference type="CTD" id="1073"/>
<dbReference type="DisGeNET" id="1073"/>
<dbReference type="GeneCards" id="CFL2"/>
<dbReference type="HGNC" id="HGNC:1875">
    <property type="gene designation" value="CFL2"/>
</dbReference>
<dbReference type="HPA" id="ENSG00000165410">
    <property type="expression patterns" value="Group enriched (heart muscle, skeletal muscle, tongue)"/>
</dbReference>
<dbReference type="MalaCards" id="CFL2"/>
<dbReference type="MIM" id="601443">
    <property type="type" value="gene"/>
</dbReference>
<dbReference type="MIM" id="610687">
    <property type="type" value="phenotype"/>
</dbReference>
<dbReference type="neXtProt" id="NX_Q9Y281"/>
<dbReference type="OpenTargets" id="ENSG00000165410"/>
<dbReference type="Orphanet" id="171436">
    <property type="disease" value="Typical nemaline myopathy"/>
</dbReference>
<dbReference type="PharmGKB" id="PA26424"/>
<dbReference type="VEuPathDB" id="HostDB:ENSG00000165410"/>
<dbReference type="eggNOG" id="KOG1735">
    <property type="taxonomic scope" value="Eukaryota"/>
</dbReference>
<dbReference type="GeneTree" id="ENSGT00950000183000"/>
<dbReference type="HOGENOM" id="CLU_094004_0_0_1"/>
<dbReference type="InParanoid" id="Q9Y281"/>
<dbReference type="OMA" id="QCRFAVY"/>
<dbReference type="OrthoDB" id="10249245at2759"/>
<dbReference type="PAN-GO" id="Q9Y281">
    <property type="GO annotations" value="6 GO annotations based on evolutionary models"/>
</dbReference>
<dbReference type="PhylomeDB" id="Q9Y281"/>
<dbReference type="TreeFam" id="TF328601"/>
<dbReference type="PathwayCommons" id="Q9Y281"/>
<dbReference type="SignaLink" id="Q9Y281"/>
<dbReference type="SIGNOR" id="Q9Y281"/>
<dbReference type="BioGRID-ORCS" id="1073">
    <property type="hits" value="5 hits in 1120 CRISPR screens"/>
</dbReference>
<dbReference type="CD-CODE" id="FB4E32DD">
    <property type="entry name" value="Presynaptic clusters and postsynaptic densities"/>
</dbReference>
<dbReference type="ChiTaRS" id="CFL2">
    <property type="organism name" value="human"/>
</dbReference>
<dbReference type="GeneWiki" id="CFL2_(gene)"/>
<dbReference type="GenomeRNAi" id="1073"/>
<dbReference type="Pharos" id="Q9Y281">
    <property type="development level" value="Tbio"/>
</dbReference>
<dbReference type="PRO" id="PR:Q9Y281"/>
<dbReference type="Proteomes" id="UP000005640">
    <property type="component" value="Chromosome 14"/>
</dbReference>
<dbReference type="RNAct" id="Q9Y281">
    <property type="molecule type" value="protein"/>
</dbReference>
<dbReference type="Bgee" id="ENSG00000165410">
    <property type="expression patterns" value="Expressed in cardiac muscle of right atrium and 191 other cell types or tissues"/>
</dbReference>
<dbReference type="ExpressionAtlas" id="Q9Y281">
    <property type="expression patterns" value="baseline and differential"/>
</dbReference>
<dbReference type="GO" id="GO:0015629">
    <property type="term" value="C:actin cytoskeleton"/>
    <property type="evidence" value="ECO:0000318"/>
    <property type="project" value="GO_Central"/>
</dbReference>
<dbReference type="GO" id="GO:0005737">
    <property type="term" value="C:cytoplasm"/>
    <property type="evidence" value="ECO:0000318"/>
    <property type="project" value="GO_Central"/>
</dbReference>
<dbReference type="GO" id="GO:0070062">
    <property type="term" value="C:extracellular exosome"/>
    <property type="evidence" value="ECO:0007005"/>
    <property type="project" value="UniProtKB"/>
</dbReference>
<dbReference type="GO" id="GO:0005615">
    <property type="term" value="C:extracellular space"/>
    <property type="evidence" value="ECO:0007005"/>
    <property type="project" value="UniProtKB"/>
</dbReference>
<dbReference type="GO" id="GO:0031674">
    <property type="term" value="C:I band"/>
    <property type="evidence" value="ECO:0000314"/>
    <property type="project" value="UniProtKB"/>
</dbReference>
<dbReference type="GO" id="GO:0016363">
    <property type="term" value="C:nuclear matrix"/>
    <property type="evidence" value="ECO:0007669"/>
    <property type="project" value="UniProtKB-SubCell"/>
</dbReference>
<dbReference type="GO" id="GO:0030018">
    <property type="term" value="C:Z disc"/>
    <property type="evidence" value="ECO:0000314"/>
    <property type="project" value="UniProtKB"/>
</dbReference>
<dbReference type="GO" id="GO:0051015">
    <property type="term" value="F:actin filament binding"/>
    <property type="evidence" value="ECO:0000250"/>
    <property type="project" value="UniProtKB"/>
</dbReference>
<dbReference type="GO" id="GO:0030042">
    <property type="term" value="P:actin filament depolymerization"/>
    <property type="evidence" value="ECO:0000314"/>
    <property type="project" value="UniProtKB"/>
</dbReference>
<dbReference type="GO" id="GO:0030043">
    <property type="term" value="P:actin filament fragmentation"/>
    <property type="evidence" value="ECO:0000318"/>
    <property type="project" value="GO_Central"/>
</dbReference>
<dbReference type="GO" id="GO:0051014">
    <property type="term" value="P:actin filament severing"/>
    <property type="evidence" value="ECO:0000318"/>
    <property type="project" value="GO_Central"/>
</dbReference>
<dbReference type="GO" id="GO:0046716">
    <property type="term" value="P:muscle cell cellular homeostasis"/>
    <property type="evidence" value="ECO:0007669"/>
    <property type="project" value="Ensembl"/>
</dbReference>
<dbReference type="GO" id="GO:0030836">
    <property type="term" value="P:positive regulation of actin filament depolymerization"/>
    <property type="evidence" value="ECO:0000315"/>
    <property type="project" value="UniProtKB"/>
</dbReference>
<dbReference type="GO" id="GO:0045214">
    <property type="term" value="P:sarcomere organization"/>
    <property type="evidence" value="ECO:0007669"/>
    <property type="project" value="Ensembl"/>
</dbReference>
<dbReference type="GO" id="GO:0007519">
    <property type="term" value="P:skeletal muscle tissue development"/>
    <property type="evidence" value="ECO:0007669"/>
    <property type="project" value="Ensembl"/>
</dbReference>
<dbReference type="CDD" id="cd11286">
    <property type="entry name" value="ADF_cofilin_like"/>
    <property type="match status" value="1"/>
</dbReference>
<dbReference type="FunFam" id="3.40.20.10:FF:000010">
    <property type="entry name" value="Putative destrin"/>
    <property type="match status" value="1"/>
</dbReference>
<dbReference type="Gene3D" id="3.40.20.10">
    <property type="entry name" value="Severin"/>
    <property type="match status" value="1"/>
</dbReference>
<dbReference type="InterPro" id="IPR002108">
    <property type="entry name" value="ADF-H"/>
</dbReference>
<dbReference type="InterPro" id="IPR029006">
    <property type="entry name" value="ADF-H/Gelsolin-like_dom_sf"/>
</dbReference>
<dbReference type="InterPro" id="IPR017904">
    <property type="entry name" value="ADF/Cofilin"/>
</dbReference>
<dbReference type="PANTHER" id="PTHR11913">
    <property type="entry name" value="COFILIN-RELATED"/>
    <property type="match status" value="1"/>
</dbReference>
<dbReference type="Pfam" id="PF00241">
    <property type="entry name" value="Cofilin_ADF"/>
    <property type="match status" value="1"/>
</dbReference>
<dbReference type="PRINTS" id="PR00006">
    <property type="entry name" value="COFILIN"/>
</dbReference>
<dbReference type="SMART" id="SM00102">
    <property type="entry name" value="ADF"/>
    <property type="match status" value="1"/>
</dbReference>
<dbReference type="SUPFAM" id="SSF55753">
    <property type="entry name" value="Actin depolymerizing proteins"/>
    <property type="match status" value="1"/>
</dbReference>
<dbReference type="PROSITE" id="PS51263">
    <property type="entry name" value="ADF_H"/>
    <property type="match status" value="1"/>
</dbReference>
<keyword id="KW-0002">3D-structure</keyword>
<keyword id="KW-0007">Acetylation</keyword>
<keyword id="KW-0009">Actin-binding</keyword>
<keyword id="KW-0025">Alternative splicing</keyword>
<keyword id="KW-0963">Cytoplasm</keyword>
<keyword id="KW-0206">Cytoskeleton</keyword>
<keyword id="KW-0903">Direct protein sequencing</keyword>
<keyword id="KW-0225">Disease variant</keyword>
<keyword id="KW-1057">Nemaline myopathy</keyword>
<keyword id="KW-0539">Nucleus</keyword>
<keyword id="KW-0597">Phosphoprotein</keyword>
<keyword id="KW-1267">Proteomics identification</keyword>
<keyword id="KW-1185">Reference proteome</keyword>
<evidence type="ECO:0000250" key="1"/>
<evidence type="ECO:0000250" key="2">
    <source>
        <dbReference type="UniProtKB" id="P45591"/>
    </source>
</evidence>
<evidence type="ECO:0000255" key="3"/>
<evidence type="ECO:0000255" key="4">
    <source>
        <dbReference type="PROSITE-ProRule" id="PRU00599"/>
    </source>
</evidence>
<evidence type="ECO:0000269" key="5">
    <source>
    </source>
</evidence>
<evidence type="ECO:0000269" key="6">
    <source>
    </source>
</evidence>
<evidence type="ECO:0000269" key="7">
    <source>
    </source>
</evidence>
<evidence type="ECO:0000269" key="8">
    <source>
    </source>
</evidence>
<evidence type="ECO:0000269" key="9">
    <source>
    </source>
</evidence>
<evidence type="ECO:0000269" key="10">
    <source ref="6"/>
</evidence>
<evidence type="ECO:0000305" key="11"/>
<evidence type="ECO:0007744" key="12">
    <source>
    </source>
</evidence>
<evidence type="ECO:0007744" key="13">
    <source>
    </source>
</evidence>
<evidence type="ECO:0007744" key="14">
    <source>
    </source>
</evidence>
<evidence type="ECO:0007744" key="15">
    <source>
    </source>
</evidence>
<evidence type="ECO:0007744" key="16">
    <source>
    </source>
</evidence>
<evidence type="ECO:0007744" key="17">
    <source>
    </source>
</evidence>
<evidence type="ECO:0007829" key="18">
    <source>
        <dbReference type="PDB" id="7M0G"/>
    </source>
</evidence>
<proteinExistence type="evidence at protein level"/>